<name>FB217_ARATH</name>
<protein>
    <recommendedName>
        <fullName>F-box protein At4g00893</fullName>
    </recommendedName>
</protein>
<gene>
    <name type="ordered locus">At4g00893</name>
    <name type="ORF">A_TM018A10</name>
    <name type="ORF">T18A10</name>
</gene>
<evidence type="ECO:0000256" key="1">
    <source>
        <dbReference type="SAM" id="MobiDB-lite"/>
    </source>
</evidence>
<accession>Q1G391</accession>
<reference key="1">
    <citation type="journal article" date="1999" name="Nature">
        <title>Sequence and analysis of chromosome 4 of the plant Arabidopsis thaliana.</title>
        <authorList>
            <person name="Mayer K.F.X."/>
            <person name="Schueller C."/>
            <person name="Wambutt R."/>
            <person name="Murphy G."/>
            <person name="Volckaert G."/>
            <person name="Pohl T."/>
            <person name="Duesterhoeft A."/>
            <person name="Stiekema W."/>
            <person name="Entian K.-D."/>
            <person name="Terryn N."/>
            <person name="Harris B."/>
            <person name="Ansorge W."/>
            <person name="Brandt P."/>
            <person name="Grivell L.A."/>
            <person name="Rieger M."/>
            <person name="Weichselgartner M."/>
            <person name="de Simone V."/>
            <person name="Obermaier B."/>
            <person name="Mache R."/>
            <person name="Mueller M."/>
            <person name="Kreis M."/>
            <person name="Delseny M."/>
            <person name="Puigdomenech P."/>
            <person name="Watson M."/>
            <person name="Schmidtheini T."/>
            <person name="Reichert B."/>
            <person name="Portetelle D."/>
            <person name="Perez-Alonso M."/>
            <person name="Boutry M."/>
            <person name="Bancroft I."/>
            <person name="Vos P."/>
            <person name="Hoheisel J."/>
            <person name="Zimmermann W."/>
            <person name="Wedler H."/>
            <person name="Ridley P."/>
            <person name="Langham S.-A."/>
            <person name="McCullagh B."/>
            <person name="Bilham L."/>
            <person name="Robben J."/>
            <person name="van der Schueren J."/>
            <person name="Grymonprez B."/>
            <person name="Chuang Y.-J."/>
            <person name="Vandenbussche F."/>
            <person name="Braeken M."/>
            <person name="Weltjens I."/>
            <person name="Voet M."/>
            <person name="Bastiaens I."/>
            <person name="Aert R."/>
            <person name="Defoor E."/>
            <person name="Weitzenegger T."/>
            <person name="Bothe G."/>
            <person name="Ramsperger U."/>
            <person name="Hilbert H."/>
            <person name="Braun M."/>
            <person name="Holzer E."/>
            <person name="Brandt A."/>
            <person name="Peters S."/>
            <person name="van Staveren M."/>
            <person name="Dirkse W."/>
            <person name="Mooijman P."/>
            <person name="Klein Lankhorst R."/>
            <person name="Rose M."/>
            <person name="Hauf J."/>
            <person name="Koetter P."/>
            <person name="Berneiser S."/>
            <person name="Hempel S."/>
            <person name="Feldpausch M."/>
            <person name="Lamberth S."/>
            <person name="Van den Daele H."/>
            <person name="De Keyser A."/>
            <person name="Buysshaert C."/>
            <person name="Gielen J."/>
            <person name="Villarroel R."/>
            <person name="De Clercq R."/>
            <person name="van Montagu M."/>
            <person name="Rogers J."/>
            <person name="Cronin A."/>
            <person name="Quail M.A."/>
            <person name="Bray-Allen S."/>
            <person name="Clark L."/>
            <person name="Doggett J."/>
            <person name="Hall S."/>
            <person name="Kay M."/>
            <person name="Lennard N."/>
            <person name="McLay K."/>
            <person name="Mayes R."/>
            <person name="Pettett A."/>
            <person name="Rajandream M.A."/>
            <person name="Lyne M."/>
            <person name="Benes V."/>
            <person name="Rechmann S."/>
            <person name="Borkova D."/>
            <person name="Bloecker H."/>
            <person name="Scharfe M."/>
            <person name="Grimm M."/>
            <person name="Loehnert T.-H."/>
            <person name="Dose S."/>
            <person name="de Haan M."/>
            <person name="Maarse A.C."/>
            <person name="Schaefer M."/>
            <person name="Mueller-Auer S."/>
            <person name="Gabel C."/>
            <person name="Fuchs M."/>
            <person name="Fartmann B."/>
            <person name="Granderath K."/>
            <person name="Dauner D."/>
            <person name="Herzl A."/>
            <person name="Neumann S."/>
            <person name="Argiriou A."/>
            <person name="Vitale D."/>
            <person name="Liguori R."/>
            <person name="Piravandi E."/>
            <person name="Massenet O."/>
            <person name="Quigley F."/>
            <person name="Clabauld G."/>
            <person name="Muendlein A."/>
            <person name="Felber R."/>
            <person name="Schnabl S."/>
            <person name="Hiller R."/>
            <person name="Schmidt W."/>
            <person name="Lecharny A."/>
            <person name="Aubourg S."/>
            <person name="Chefdor F."/>
            <person name="Cooke R."/>
            <person name="Berger C."/>
            <person name="Monfort A."/>
            <person name="Casacuberta E."/>
            <person name="Gibbons T."/>
            <person name="Weber N."/>
            <person name="Vandenbol M."/>
            <person name="Bargues M."/>
            <person name="Terol J."/>
            <person name="Torres A."/>
            <person name="Perez-Perez A."/>
            <person name="Purnelle B."/>
            <person name="Bent E."/>
            <person name="Johnson S."/>
            <person name="Tacon D."/>
            <person name="Jesse T."/>
            <person name="Heijnen L."/>
            <person name="Schwarz S."/>
            <person name="Scholler P."/>
            <person name="Heber S."/>
            <person name="Francs P."/>
            <person name="Bielke C."/>
            <person name="Frishman D."/>
            <person name="Haase D."/>
            <person name="Lemcke K."/>
            <person name="Mewes H.-W."/>
            <person name="Stocker S."/>
            <person name="Zaccaria P."/>
            <person name="Bevan M."/>
            <person name="Wilson R.K."/>
            <person name="de la Bastide M."/>
            <person name="Habermann K."/>
            <person name="Parnell L."/>
            <person name="Dedhia N."/>
            <person name="Gnoj L."/>
            <person name="Schutz K."/>
            <person name="Huang E."/>
            <person name="Spiegel L."/>
            <person name="Sekhon M."/>
            <person name="Murray J."/>
            <person name="Sheet P."/>
            <person name="Cordes M."/>
            <person name="Abu-Threideh J."/>
            <person name="Stoneking T."/>
            <person name="Kalicki J."/>
            <person name="Graves T."/>
            <person name="Harmon G."/>
            <person name="Edwards J."/>
            <person name="Latreille P."/>
            <person name="Courtney L."/>
            <person name="Cloud J."/>
            <person name="Abbott A."/>
            <person name="Scott K."/>
            <person name="Johnson D."/>
            <person name="Minx P."/>
            <person name="Bentley D."/>
            <person name="Fulton B."/>
            <person name="Miller N."/>
            <person name="Greco T."/>
            <person name="Kemp K."/>
            <person name="Kramer J."/>
            <person name="Fulton L."/>
            <person name="Mardis E."/>
            <person name="Dante M."/>
            <person name="Pepin K."/>
            <person name="Hillier L.W."/>
            <person name="Nelson J."/>
            <person name="Spieth J."/>
            <person name="Ryan E."/>
            <person name="Andrews S."/>
            <person name="Geisel C."/>
            <person name="Layman D."/>
            <person name="Du H."/>
            <person name="Ali J."/>
            <person name="Berghoff A."/>
            <person name="Jones K."/>
            <person name="Drone K."/>
            <person name="Cotton M."/>
            <person name="Joshu C."/>
            <person name="Antonoiu B."/>
            <person name="Zidanic M."/>
            <person name="Strong C."/>
            <person name="Sun H."/>
            <person name="Lamar B."/>
            <person name="Yordan C."/>
            <person name="Ma P."/>
            <person name="Zhong J."/>
            <person name="Preston R."/>
            <person name="Vil D."/>
            <person name="Shekher M."/>
            <person name="Matero A."/>
            <person name="Shah R."/>
            <person name="Swaby I.K."/>
            <person name="O'Shaughnessy A."/>
            <person name="Rodriguez M."/>
            <person name="Hoffman J."/>
            <person name="Till S."/>
            <person name="Granat S."/>
            <person name="Shohdy N."/>
            <person name="Hasegawa A."/>
            <person name="Hameed A."/>
            <person name="Lodhi M."/>
            <person name="Johnson A."/>
            <person name="Chen E."/>
            <person name="Marra M.A."/>
            <person name="Martienssen R."/>
            <person name="McCombie W.R."/>
        </authorList>
    </citation>
    <scope>NUCLEOTIDE SEQUENCE [LARGE SCALE GENOMIC DNA]</scope>
    <source>
        <strain>cv. Columbia</strain>
    </source>
</reference>
<reference key="2">
    <citation type="journal article" date="2017" name="Plant J.">
        <title>Araport11: a complete reannotation of the Arabidopsis thaliana reference genome.</title>
        <authorList>
            <person name="Cheng C.Y."/>
            <person name="Krishnakumar V."/>
            <person name="Chan A.P."/>
            <person name="Thibaud-Nissen F."/>
            <person name="Schobel S."/>
            <person name="Town C.D."/>
        </authorList>
    </citation>
    <scope>GENOME REANNOTATION</scope>
    <source>
        <strain>cv. Columbia</strain>
    </source>
</reference>
<reference key="3">
    <citation type="journal article" date="2006" name="Plant Biotechnol. J.">
        <title>Simultaneous high-throughput recombinational cloning of open reading frames in closed and open configurations.</title>
        <authorList>
            <person name="Underwood B.A."/>
            <person name="Vanderhaeghen R."/>
            <person name="Whitford R."/>
            <person name="Town C.D."/>
            <person name="Hilson P."/>
        </authorList>
    </citation>
    <scope>NUCLEOTIDE SEQUENCE [LARGE SCALE MRNA]</scope>
    <source>
        <strain>cv. Columbia</strain>
    </source>
</reference>
<keyword id="KW-1185">Reference proteome</keyword>
<proteinExistence type="evidence at transcript level"/>
<sequence>MLPSPSVHMASPPPSLNMASHPPSPATASRKRFQDSSKKIMNPSFADLPSSLIEEIMLLLVLKDNIRASAACKSWYEAGVSVRVVDKHPWLMCFPKRGNLFEFRDPLHWKLHTLDLPELAESTVCYSRFGWLLMRKASSNDVFFFNPFSRDIISLPMCELDFQQIAFSCPPTSDDCVLLAIKFVPGEVNRVTVSTCNPGATKWITNDFPTFLRLFYMQSNLVYRRDRFYCFNAEGTLYSFEPSYREWSYICADKLRCPYVHENQYMWCGKAVFLVEKKGELFVMFTCSNEKPMVYKLFSMKWKELSRTTLDGMTFFVSFYNSELRNNLPWMRNNVYFSRFGYNRKHCVSFSFDESRYNTPKEWEQWVELCPPQSLWIDTPKNVLDYFL</sequence>
<organism>
    <name type="scientific">Arabidopsis thaliana</name>
    <name type="common">Mouse-ear cress</name>
    <dbReference type="NCBI Taxonomy" id="3702"/>
    <lineage>
        <taxon>Eukaryota</taxon>
        <taxon>Viridiplantae</taxon>
        <taxon>Streptophyta</taxon>
        <taxon>Embryophyta</taxon>
        <taxon>Tracheophyta</taxon>
        <taxon>Spermatophyta</taxon>
        <taxon>Magnoliopsida</taxon>
        <taxon>eudicotyledons</taxon>
        <taxon>Gunneridae</taxon>
        <taxon>Pentapetalae</taxon>
        <taxon>rosids</taxon>
        <taxon>malvids</taxon>
        <taxon>Brassicales</taxon>
        <taxon>Brassicaceae</taxon>
        <taxon>Camelineae</taxon>
        <taxon>Arabidopsis</taxon>
    </lineage>
</organism>
<dbReference type="EMBL" id="AF013294">
    <property type="status" value="NOT_ANNOTATED_CDS"/>
    <property type="molecule type" value="Genomic_DNA"/>
</dbReference>
<dbReference type="EMBL" id="CP002687">
    <property type="protein sequence ID" value="AEE81951.1"/>
    <property type="molecule type" value="Genomic_DNA"/>
</dbReference>
<dbReference type="EMBL" id="DQ487693">
    <property type="protein sequence ID" value="ABF59273.1"/>
    <property type="molecule type" value="mRNA"/>
</dbReference>
<dbReference type="RefSeq" id="NP_001078341.1">
    <property type="nucleotide sequence ID" value="NM_001084872.2"/>
</dbReference>
<dbReference type="STRING" id="3702.Q1G391"/>
<dbReference type="PaxDb" id="3702-AT4G00893.1"/>
<dbReference type="ProteomicsDB" id="222397"/>
<dbReference type="EnsemblPlants" id="AT4G00893.1">
    <property type="protein sequence ID" value="AT4G00893.1"/>
    <property type="gene ID" value="AT4G00893"/>
</dbReference>
<dbReference type="GeneID" id="5008108"/>
<dbReference type="Gramene" id="AT4G00893.1">
    <property type="protein sequence ID" value="AT4G00893.1"/>
    <property type="gene ID" value="AT4G00893"/>
</dbReference>
<dbReference type="KEGG" id="ath:AT4G00893"/>
<dbReference type="Araport" id="AT4G00893"/>
<dbReference type="TAIR" id="AT4G00893"/>
<dbReference type="eggNOG" id="ENOG502QWFR">
    <property type="taxonomic scope" value="Eukaryota"/>
</dbReference>
<dbReference type="HOGENOM" id="CLU_060427_0_0_1"/>
<dbReference type="InParanoid" id="Q1G391"/>
<dbReference type="OMA" id="IRTNLPW"/>
<dbReference type="PhylomeDB" id="Q1G391"/>
<dbReference type="PRO" id="PR:Q1G391"/>
<dbReference type="Proteomes" id="UP000006548">
    <property type="component" value="Chromosome 4"/>
</dbReference>
<dbReference type="ExpressionAtlas" id="Q1G391">
    <property type="expression patterns" value="baseline and differential"/>
</dbReference>
<dbReference type="InterPro" id="IPR036047">
    <property type="entry name" value="F-box-like_dom_sf"/>
</dbReference>
<dbReference type="InterPro" id="IPR001810">
    <property type="entry name" value="F-box_dom"/>
</dbReference>
<dbReference type="InterPro" id="IPR005174">
    <property type="entry name" value="KIB1-4_b-propeller"/>
</dbReference>
<dbReference type="PANTHER" id="PTHR33127:SF30">
    <property type="entry name" value="F-BOX DOMAIN-CONTAINING PROTEIN"/>
    <property type="match status" value="1"/>
</dbReference>
<dbReference type="PANTHER" id="PTHR33127">
    <property type="entry name" value="TRANSMEMBRANE PROTEIN"/>
    <property type="match status" value="1"/>
</dbReference>
<dbReference type="Pfam" id="PF03478">
    <property type="entry name" value="Beta-prop_KIB1-4"/>
    <property type="match status" value="1"/>
</dbReference>
<dbReference type="Pfam" id="PF00646">
    <property type="entry name" value="F-box"/>
    <property type="match status" value="1"/>
</dbReference>
<dbReference type="SUPFAM" id="SSF81383">
    <property type="entry name" value="F-box domain"/>
    <property type="match status" value="1"/>
</dbReference>
<feature type="chain" id="PRO_0000283486" description="F-box protein At4g00893">
    <location>
        <begin position="1"/>
        <end position="388"/>
    </location>
</feature>
<feature type="domain" description="F-box">
    <location>
        <begin position="42"/>
        <end position="88"/>
    </location>
</feature>
<feature type="region of interest" description="Disordered" evidence="1">
    <location>
        <begin position="1"/>
        <end position="30"/>
    </location>
</feature>